<comment type="function">
    <text evidence="1">Catalyzes the ATP-dependent condensation of GlcN-Ins and L-cysteine to form L-Cys-GlcN-Ins.</text>
</comment>
<comment type="catalytic activity">
    <reaction evidence="1">
        <text>1D-myo-inositol 2-amino-2-deoxy-alpha-D-glucopyranoside + L-cysteine + ATP = 1D-myo-inositol 2-(L-cysteinylamino)-2-deoxy-alpha-D-glucopyranoside + AMP + diphosphate + H(+)</text>
        <dbReference type="Rhea" id="RHEA:26176"/>
        <dbReference type="ChEBI" id="CHEBI:15378"/>
        <dbReference type="ChEBI" id="CHEBI:30616"/>
        <dbReference type="ChEBI" id="CHEBI:33019"/>
        <dbReference type="ChEBI" id="CHEBI:35235"/>
        <dbReference type="ChEBI" id="CHEBI:58886"/>
        <dbReference type="ChEBI" id="CHEBI:58887"/>
        <dbReference type="ChEBI" id="CHEBI:456215"/>
        <dbReference type="EC" id="6.3.1.13"/>
    </reaction>
</comment>
<comment type="cofactor">
    <cofactor evidence="1">
        <name>Zn(2+)</name>
        <dbReference type="ChEBI" id="CHEBI:29105"/>
    </cofactor>
    <text evidence="1">Binds 1 zinc ion per subunit.</text>
</comment>
<comment type="subunit">
    <text evidence="1">Monomer.</text>
</comment>
<comment type="similarity">
    <text evidence="1">Belongs to the class-I aminoacyl-tRNA synthetase family. MshC subfamily.</text>
</comment>
<name>MSHC_JONDD</name>
<sequence>MITWPAPQVPSIPGALTSVRVMDTSSGQLVETVRPGVGESSMYVCGITPYDATHIGHAATYIAFDLLYRAWLDAGQRVVYTSNVTDVDDPLLERATATGVDWTELATSQITLFFDDMSALGVLPPHTYLSAVESVPMVISATRHLLESGRAYRVPVPAQERPVHSPAYDIYADVTSDPDFGSISGYTSEERVRLFTDRGGDPATPGKKNPIDPIMWKAQREGEPGWDGDDLGWGRPGWHIECTTIAHCGIGRSCTVQGGGSDLIFPHHEMSSAHARALFGQDAGASVHAHAGLIAYQGEKMSKSKGNLVFVSRLRQEGVDPMAIRLAILANHYRDEWEWTSDVLDAGIKRHQLWLQAMSTNGGPHPGATLAAMREALSNDLDAPRALDAVDAWAYATLAGNDEDPGAPGVVSRAVNALLGIRL</sequence>
<gene>
    <name evidence="1" type="primary">mshC</name>
    <name type="ordered locus">Jden_1195</name>
</gene>
<proteinExistence type="inferred from homology"/>
<protein>
    <recommendedName>
        <fullName evidence="1">L-cysteine:1D-myo-inositol 2-amino-2-deoxy-alpha-D-glucopyranoside ligase</fullName>
        <shortName evidence="1">L-Cys:GlcN-Ins ligase</shortName>
        <ecNumber evidence="1">6.3.1.13</ecNumber>
    </recommendedName>
    <alternativeName>
        <fullName evidence="1">Mycothiol ligase</fullName>
        <shortName evidence="1">MSH ligase</shortName>
    </alternativeName>
</protein>
<reference key="1">
    <citation type="journal article" date="2009" name="Stand. Genomic Sci.">
        <title>Complete genome sequence of Jonesia denitrificans type strain (Prevot 55134).</title>
        <authorList>
            <person name="Pukall R."/>
            <person name="Gehrich-Schroter G."/>
            <person name="Lapidus A."/>
            <person name="Nolan M."/>
            <person name="Glavina Del Rio T."/>
            <person name="Lucas S."/>
            <person name="Chen F."/>
            <person name="Tice H."/>
            <person name="Pitluck S."/>
            <person name="Cheng J.F."/>
            <person name="Copeland A."/>
            <person name="Saunders E."/>
            <person name="Brettin T."/>
            <person name="Detter J.C."/>
            <person name="Bruce D."/>
            <person name="Goodwin L."/>
            <person name="Pati A."/>
            <person name="Ivanova N."/>
            <person name="Mavromatis K."/>
            <person name="Ovchinnikova G."/>
            <person name="Chen A."/>
            <person name="Palaniappan K."/>
            <person name="Land M."/>
            <person name="Hauser L."/>
            <person name="Chang Y.J."/>
            <person name="Jeffries C.D."/>
            <person name="Chain P."/>
            <person name="Goker M."/>
            <person name="Bristow J."/>
            <person name="Eisen J.A."/>
            <person name="Markowitz V."/>
            <person name="Hugenholtz P."/>
            <person name="Kyrpides N.C."/>
            <person name="Klenk H.P."/>
            <person name="Han C."/>
        </authorList>
    </citation>
    <scope>NUCLEOTIDE SEQUENCE [LARGE SCALE GENOMIC DNA]</scope>
    <source>
        <strain>ATCC 14870 / DSM 20603 / BCRC 15368 / CIP 55.134 / JCM 11481 / NBRC 15587 / NCTC 10816 / Prevot 55134</strain>
    </source>
</reference>
<keyword id="KW-0067">ATP-binding</keyword>
<keyword id="KW-0436">Ligase</keyword>
<keyword id="KW-0479">Metal-binding</keyword>
<keyword id="KW-0547">Nucleotide-binding</keyword>
<keyword id="KW-1185">Reference proteome</keyword>
<keyword id="KW-0862">Zinc</keyword>
<evidence type="ECO:0000255" key="1">
    <source>
        <dbReference type="HAMAP-Rule" id="MF_01697"/>
    </source>
</evidence>
<organism>
    <name type="scientific">Jonesia denitrificans (strain ATCC 14870 / DSM 20603 / BCRC 15368 / CIP 55.134 / JCM 11481 / NBRC 15587 / NCTC 10816 / Prevot 55134)</name>
    <name type="common">Listeria denitrificans</name>
    <dbReference type="NCBI Taxonomy" id="471856"/>
    <lineage>
        <taxon>Bacteria</taxon>
        <taxon>Bacillati</taxon>
        <taxon>Actinomycetota</taxon>
        <taxon>Actinomycetes</taxon>
        <taxon>Micrococcales</taxon>
        <taxon>Jonesiaceae</taxon>
        <taxon>Jonesia</taxon>
    </lineage>
</organism>
<feature type="chain" id="PRO_0000400450" description="L-cysteine:1D-myo-inositol 2-amino-2-deoxy-alpha-D-glucopyranoside ligase">
    <location>
        <begin position="1"/>
        <end position="423"/>
    </location>
</feature>
<feature type="short sequence motif" description="'HIGH' region" evidence="1">
    <location>
        <begin position="47"/>
        <end position="57"/>
    </location>
</feature>
<feature type="short sequence motif" description="'ERGGDP' region" evidence="1">
    <location>
        <begin position="197"/>
        <end position="202"/>
    </location>
</feature>
<feature type="short sequence motif" description="'KMSKS' region" evidence="1">
    <location>
        <begin position="300"/>
        <end position="304"/>
    </location>
</feature>
<feature type="binding site" evidence="1">
    <location>
        <begin position="45"/>
        <end position="48"/>
    </location>
    <ligand>
        <name>L-cysteinyl-5'-AMP</name>
        <dbReference type="ChEBI" id="CHEBI:144924"/>
    </ligand>
</feature>
<feature type="binding site" evidence="1">
    <location>
        <position position="45"/>
    </location>
    <ligand>
        <name>Zn(2+)</name>
        <dbReference type="ChEBI" id="CHEBI:29105"/>
    </ligand>
</feature>
<feature type="binding site" evidence="1">
    <location>
        <position position="60"/>
    </location>
    <ligand>
        <name>L-cysteinyl-5'-AMP</name>
        <dbReference type="ChEBI" id="CHEBI:144924"/>
    </ligand>
</feature>
<feature type="binding site" evidence="1">
    <location>
        <begin position="83"/>
        <end position="85"/>
    </location>
    <ligand>
        <name>L-cysteinyl-5'-AMP</name>
        <dbReference type="ChEBI" id="CHEBI:144924"/>
    </ligand>
</feature>
<feature type="binding site" evidence="1">
    <location>
        <position position="238"/>
    </location>
    <ligand>
        <name>L-cysteinyl-5'-AMP</name>
        <dbReference type="ChEBI" id="CHEBI:144924"/>
    </ligand>
</feature>
<feature type="binding site" evidence="1">
    <location>
        <position position="242"/>
    </location>
    <ligand>
        <name>Zn(2+)</name>
        <dbReference type="ChEBI" id="CHEBI:29105"/>
    </ligand>
</feature>
<feature type="binding site" evidence="1">
    <location>
        <begin position="260"/>
        <end position="262"/>
    </location>
    <ligand>
        <name>L-cysteinyl-5'-AMP</name>
        <dbReference type="ChEBI" id="CHEBI:144924"/>
    </ligand>
</feature>
<feature type="binding site" evidence="1">
    <location>
        <position position="267"/>
    </location>
    <ligand>
        <name>Zn(2+)</name>
        <dbReference type="ChEBI" id="CHEBI:29105"/>
    </ligand>
</feature>
<feature type="binding site" evidence="1">
    <location>
        <position position="294"/>
    </location>
    <ligand>
        <name>L-cysteinyl-5'-AMP</name>
        <dbReference type="ChEBI" id="CHEBI:144924"/>
    </ligand>
</feature>
<dbReference type="EC" id="6.3.1.13" evidence="1"/>
<dbReference type="EMBL" id="CP001706">
    <property type="protein sequence ID" value="ACV08851.1"/>
    <property type="molecule type" value="Genomic_DNA"/>
</dbReference>
<dbReference type="RefSeq" id="WP_015771479.1">
    <property type="nucleotide sequence ID" value="NC_013174.1"/>
</dbReference>
<dbReference type="SMR" id="C7R3Z4"/>
<dbReference type="STRING" id="471856.Jden_1195"/>
<dbReference type="KEGG" id="jde:Jden_1195"/>
<dbReference type="eggNOG" id="COG0215">
    <property type="taxonomic scope" value="Bacteria"/>
</dbReference>
<dbReference type="HOGENOM" id="CLU_013528_0_0_11"/>
<dbReference type="OrthoDB" id="9815130at2"/>
<dbReference type="Proteomes" id="UP000000628">
    <property type="component" value="Chromosome"/>
</dbReference>
<dbReference type="GO" id="GO:0005829">
    <property type="term" value="C:cytosol"/>
    <property type="evidence" value="ECO:0007669"/>
    <property type="project" value="TreeGrafter"/>
</dbReference>
<dbReference type="GO" id="GO:0005524">
    <property type="term" value="F:ATP binding"/>
    <property type="evidence" value="ECO:0007669"/>
    <property type="project" value="UniProtKB-KW"/>
</dbReference>
<dbReference type="GO" id="GO:0035446">
    <property type="term" value="F:cysteine-glucosaminylinositol ligase activity"/>
    <property type="evidence" value="ECO:0007669"/>
    <property type="project" value="UniProtKB-UniRule"/>
</dbReference>
<dbReference type="GO" id="GO:0004817">
    <property type="term" value="F:cysteine-tRNA ligase activity"/>
    <property type="evidence" value="ECO:0007669"/>
    <property type="project" value="TreeGrafter"/>
</dbReference>
<dbReference type="GO" id="GO:0008270">
    <property type="term" value="F:zinc ion binding"/>
    <property type="evidence" value="ECO:0007669"/>
    <property type="project" value="UniProtKB-UniRule"/>
</dbReference>
<dbReference type="GO" id="GO:0006423">
    <property type="term" value="P:cysteinyl-tRNA aminoacylation"/>
    <property type="evidence" value="ECO:0007669"/>
    <property type="project" value="TreeGrafter"/>
</dbReference>
<dbReference type="GO" id="GO:0010125">
    <property type="term" value="P:mycothiol biosynthetic process"/>
    <property type="evidence" value="ECO:0007669"/>
    <property type="project" value="UniProtKB-UniRule"/>
</dbReference>
<dbReference type="Gene3D" id="1.20.120.640">
    <property type="entry name" value="Anticodon-binding domain of a subclass of class I aminoacyl-tRNA synthetases"/>
    <property type="match status" value="1"/>
</dbReference>
<dbReference type="Gene3D" id="3.40.50.620">
    <property type="entry name" value="HUPs"/>
    <property type="match status" value="1"/>
</dbReference>
<dbReference type="HAMAP" id="MF_01697">
    <property type="entry name" value="MshC"/>
    <property type="match status" value="1"/>
</dbReference>
<dbReference type="InterPro" id="IPR024909">
    <property type="entry name" value="Cys-tRNA/MSH_ligase"/>
</dbReference>
<dbReference type="InterPro" id="IPR017812">
    <property type="entry name" value="Mycothiol_ligase_MshC"/>
</dbReference>
<dbReference type="InterPro" id="IPR014729">
    <property type="entry name" value="Rossmann-like_a/b/a_fold"/>
</dbReference>
<dbReference type="InterPro" id="IPR032678">
    <property type="entry name" value="tRNA-synt_1_cat_dom"/>
</dbReference>
<dbReference type="NCBIfam" id="TIGR03447">
    <property type="entry name" value="mycothiol_MshC"/>
    <property type="match status" value="1"/>
</dbReference>
<dbReference type="PANTHER" id="PTHR10890:SF3">
    <property type="entry name" value="CYSTEINE--TRNA LIGASE, CYTOPLASMIC"/>
    <property type="match status" value="1"/>
</dbReference>
<dbReference type="PANTHER" id="PTHR10890">
    <property type="entry name" value="CYSTEINYL-TRNA SYNTHETASE"/>
    <property type="match status" value="1"/>
</dbReference>
<dbReference type="Pfam" id="PF01406">
    <property type="entry name" value="tRNA-synt_1e"/>
    <property type="match status" value="1"/>
</dbReference>
<dbReference type="PRINTS" id="PR00983">
    <property type="entry name" value="TRNASYNTHCYS"/>
</dbReference>
<dbReference type="SUPFAM" id="SSF52374">
    <property type="entry name" value="Nucleotidylyl transferase"/>
    <property type="match status" value="1"/>
</dbReference>
<accession>C7R3Z4</accession>